<sequence length="355" mass="41077">MIEKLQVIEEKYLELEKKISDPEIISQPQEWQKLMKEHSNLQPIVEKFREYKRILDTIKEAEELLDTDLDEDFEKLVKEELNRAKEQKEIVETQLKILLLPKDPNDEKNVIMEIRAGAGGEEAALFAAELFRMYSRYAERKNWKVEVMSTSESDLDGFKEVIFMISGKGAYSRLKYESGVHRVQRVPVTESGGRIHTSTATVAVLPEVEDVEVEIREEDLEIDTFRAGGAGGQHVNKTESAVRIVHKPTGIVVTCQDERSQHANRDRAMKILRARLYDYYQSIQQKEIESQRRSQVGTGDRSERIRTYNFPQGRVTDHRIGLTLYKLEQILDGELDEIIDALITHFQTERLKEIG</sequence>
<name>RF1_CALBD</name>
<gene>
    <name evidence="1" type="primary">prfA</name>
    <name type="ordered locus">Athe_1071</name>
</gene>
<accession>B9MR68</accession>
<comment type="function">
    <text evidence="1">Peptide chain release factor 1 directs the termination of translation in response to the peptide chain termination codons UAG and UAA.</text>
</comment>
<comment type="subcellular location">
    <subcellularLocation>
        <location evidence="1">Cytoplasm</location>
    </subcellularLocation>
</comment>
<comment type="PTM">
    <text evidence="1">Methylated by PrmC. Methylation increases the termination efficiency of RF1.</text>
</comment>
<comment type="similarity">
    <text evidence="1">Belongs to the prokaryotic/mitochondrial release factor family.</text>
</comment>
<protein>
    <recommendedName>
        <fullName evidence="1">Peptide chain release factor 1</fullName>
        <shortName evidence="1">RF-1</shortName>
    </recommendedName>
</protein>
<dbReference type="EMBL" id="CP001393">
    <property type="protein sequence ID" value="ACM60172.1"/>
    <property type="molecule type" value="Genomic_DNA"/>
</dbReference>
<dbReference type="RefSeq" id="WP_013430569.1">
    <property type="nucleotide sequence ID" value="NC_012034.1"/>
</dbReference>
<dbReference type="SMR" id="B9MR68"/>
<dbReference type="STRING" id="521460.Athe_1071"/>
<dbReference type="GeneID" id="31772422"/>
<dbReference type="KEGG" id="ate:Athe_1071"/>
<dbReference type="eggNOG" id="COG0216">
    <property type="taxonomic scope" value="Bacteria"/>
</dbReference>
<dbReference type="HOGENOM" id="CLU_036856_0_1_9"/>
<dbReference type="Proteomes" id="UP000007723">
    <property type="component" value="Chromosome"/>
</dbReference>
<dbReference type="GO" id="GO:0005737">
    <property type="term" value="C:cytoplasm"/>
    <property type="evidence" value="ECO:0007669"/>
    <property type="project" value="UniProtKB-SubCell"/>
</dbReference>
<dbReference type="GO" id="GO:0016149">
    <property type="term" value="F:translation release factor activity, codon specific"/>
    <property type="evidence" value="ECO:0007669"/>
    <property type="project" value="UniProtKB-UniRule"/>
</dbReference>
<dbReference type="FunFam" id="3.30.160.20:FF:000004">
    <property type="entry name" value="Peptide chain release factor 1"/>
    <property type="match status" value="1"/>
</dbReference>
<dbReference type="FunFam" id="3.30.70.1660:FF:000002">
    <property type="entry name" value="Peptide chain release factor 1"/>
    <property type="match status" value="1"/>
</dbReference>
<dbReference type="FunFam" id="3.30.70.1660:FF:000004">
    <property type="entry name" value="Peptide chain release factor 1"/>
    <property type="match status" value="1"/>
</dbReference>
<dbReference type="Gene3D" id="3.30.160.20">
    <property type="match status" value="1"/>
</dbReference>
<dbReference type="Gene3D" id="3.30.70.1660">
    <property type="match status" value="1"/>
</dbReference>
<dbReference type="Gene3D" id="6.10.140.1950">
    <property type="match status" value="1"/>
</dbReference>
<dbReference type="HAMAP" id="MF_00093">
    <property type="entry name" value="Rel_fac_1"/>
    <property type="match status" value="1"/>
</dbReference>
<dbReference type="InterPro" id="IPR005139">
    <property type="entry name" value="PCRF"/>
</dbReference>
<dbReference type="InterPro" id="IPR000352">
    <property type="entry name" value="Pep_chain_release_fac_I"/>
</dbReference>
<dbReference type="InterPro" id="IPR045853">
    <property type="entry name" value="Pep_chain_release_fac_I_sf"/>
</dbReference>
<dbReference type="InterPro" id="IPR050057">
    <property type="entry name" value="Prokaryotic/Mito_RF"/>
</dbReference>
<dbReference type="InterPro" id="IPR004373">
    <property type="entry name" value="RF-1"/>
</dbReference>
<dbReference type="NCBIfam" id="TIGR00019">
    <property type="entry name" value="prfA"/>
    <property type="match status" value="1"/>
</dbReference>
<dbReference type="NCBIfam" id="NF001859">
    <property type="entry name" value="PRK00591.1"/>
    <property type="match status" value="1"/>
</dbReference>
<dbReference type="PANTHER" id="PTHR43804">
    <property type="entry name" value="LD18447P"/>
    <property type="match status" value="1"/>
</dbReference>
<dbReference type="PANTHER" id="PTHR43804:SF7">
    <property type="entry name" value="LD18447P"/>
    <property type="match status" value="1"/>
</dbReference>
<dbReference type="Pfam" id="PF03462">
    <property type="entry name" value="PCRF"/>
    <property type="match status" value="1"/>
</dbReference>
<dbReference type="Pfam" id="PF00472">
    <property type="entry name" value="RF-1"/>
    <property type="match status" value="1"/>
</dbReference>
<dbReference type="SMART" id="SM00937">
    <property type="entry name" value="PCRF"/>
    <property type="match status" value="1"/>
</dbReference>
<dbReference type="SUPFAM" id="SSF75620">
    <property type="entry name" value="Release factor"/>
    <property type="match status" value="1"/>
</dbReference>
<dbReference type="PROSITE" id="PS00745">
    <property type="entry name" value="RF_PROK_I"/>
    <property type="match status" value="1"/>
</dbReference>
<organism>
    <name type="scientific">Caldicellulosiruptor bescii (strain ATCC BAA-1888 / DSM 6725 / KCTC 15123 / Z-1320)</name>
    <name type="common">Anaerocellum thermophilum</name>
    <dbReference type="NCBI Taxonomy" id="521460"/>
    <lineage>
        <taxon>Bacteria</taxon>
        <taxon>Bacillati</taxon>
        <taxon>Bacillota</taxon>
        <taxon>Bacillota incertae sedis</taxon>
        <taxon>Caldicellulosiruptorales</taxon>
        <taxon>Caldicellulosiruptoraceae</taxon>
        <taxon>Caldicellulosiruptor</taxon>
    </lineage>
</organism>
<keyword id="KW-0963">Cytoplasm</keyword>
<keyword id="KW-0488">Methylation</keyword>
<keyword id="KW-0648">Protein biosynthesis</keyword>
<reference key="1">
    <citation type="submission" date="2009-01" db="EMBL/GenBank/DDBJ databases">
        <title>Complete sequence of chromosome of Caldicellulosiruptor becscii DSM 6725.</title>
        <authorList>
            <person name="Lucas S."/>
            <person name="Copeland A."/>
            <person name="Lapidus A."/>
            <person name="Glavina del Rio T."/>
            <person name="Tice H."/>
            <person name="Bruce D."/>
            <person name="Goodwin L."/>
            <person name="Pitluck S."/>
            <person name="Sims D."/>
            <person name="Meincke L."/>
            <person name="Brettin T."/>
            <person name="Detter J.C."/>
            <person name="Han C."/>
            <person name="Larimer F."/>
            <person name="Land M."/>
            <person name="Hauser L."/>
            <person name="Kyrpides N."/>
            <person name="Ovchinnikova G."/>
            <person name="Kataeva I."/>
            <person name="Adams M.W.W."/>
        </authorList>
    </citation>
    <scope>NUCLEOTIDE SEQUENCE [LARGE SCALE GENOMIC DNA]</scope>
    <source>
        <strain>ATCC BAA-1888 / DSM 6725 / KCTC 15123 / Z-1320</strain>
    </source>
</reference>
<feature type="chain" id="PRO_1000193465" description="Peptide chain release factor 1">
    <location>
        <begin position="1"/>
        <end position="355"/>
    </location>
</feature>
<feature type="modified residue" description="N5-methylglutamine" evidence="1">
    <location>
        <position position="233"/>
    </location>
</feature>
<evidence type="ECO:0000255" key="1">
    <source>
        <dbReference type="HAMAP-Rule" id="MF_00093"/>
    </source>
</evidence>
<proteinExistence type="inferred from homology"/>